<dbReference type="EMBL" id="M12384">
    <property type="protein sequence ID" value="AAA39683.1"/>
    <property type="molecule type" value="mRNA"/>
</dbReference>
<dbReference type="EMBL" id="BC063782">
    <property type="protein sequence ID" value="AAH63782.1"/>
    <property type="molecule type" value="mRNA"/>
</dbReference>
<dbReference type="EMBL" id="BC141050">
    <property type="protein sequence ID" value="AAI41051.1"/>
    <property type="molecule type" value="mRNA"/>
</dbReference>
<dbReference type="RefSeq" id="NP_035543.2">
    <property type="nucleotide sequence ID" value="NM_011413.2"/>
</dbReference>
<dbReference type="SMR" id="A0AAQ4VMX2"/>
<dbReference type="MEROPS" id="I39.951"/>
<dbReference type="iPTMnet" id="B9EIU2"/>
<dbReference type="PhosphoSitePlus" id="A0AAQ4VMX2"/>
<dbReference type="PeptideAtlas" id="A0AAQ4VMX2"/>
<dbReference type="DNASU" id="625018"/>
<dbReference type="Ensembl" id="ENSMUST00000160679.9">
    <property type="protein sequence ID" value="ENSMUSP00000160029.1"/>
    <property type="gene ID" value="ENSMUSG00000015451.18"/>
</dbReference>
<dbReference type="GeneID" id="625018"/>
<dbReference type="KEGG" id="mmu:625018"/>
<dbReference type="UCSC" id="uc008cdp.1">
    <property type="organism name" value="mouse"/>
</dbReference>
<dbReference type="CTD" id="720"/>
<dbReference type="MGI" id="MGI:98320">
    <property type="gene designation" value="C4a"/>
</dbReference>
<dbReference type="GeneTree" id="ENSGT00940000155739"/>
<dbReference type="BioGRID-ORCS" id="625018">
    <property type="hits" value="2 hits in 17 CRISPR screens"/>
</dbReference>
<dbReference type="ChiTaRS" id="C4a">
    <property type="organism name" value="mouse"/>
</dbReference>
<dbReference type="Proteomes" id="UP000000589">
    <property type="component" value="Chromosome 17"/>
</dbReference>
<dbReference type="GO" id="GO:0030424">
    <property type="term" value="C:axon"/>
    <property type="evidence" value="ECO:0007669"/>
    <property type="project" value="UniProtKB-SubCell"/>
</dbReference>
<dbReference type="GO" id="GO:0030425">
    <property type="term" value="C:dendrite"/>
    <property type="evidence" value="ECO:0007669"/>
    <property type="project" value="UniProtKB-SubCell"/>
</dbReference>
<dbReference type="GO" id="GO:0005615">
    <property type="term" value="C:extracellular space"/>
    <property type="evidence" value="ECO:0000314"/>
    <property type="project" value="MGI"/>
</dbReference>
<dbReference type="GO" id="GO:0045202">
    <property type="term" value="C:synapse"/>
    <property type="evidence" value="ECO:0007669"/>
    <property type="project" value="UniProtKB-SubCell"/>
</dbReference>
<dbReference type="GO" id="GO:0004866">
    <property type="term" value="F:endopeptidase inhibitor activity"/>
    <property type="evidence" value="ECO:0007669"/>
    <property type="project" value="InterPro"/>
</dbReference>
<dbReference type="GO" id="GO:0006956">
    <property type="term" value="P:complement activation"/>
    <property type="evidence" value="ECO:0000314"/>
    <property type="project" value="MGI"/>
</dbReference>
<dbReference type="GO" id="GO:0006958">
    <property type="term" value="P:complement activation, classical pathway"/>
    <property type="evidence" value="ECO:0007669"/>
    <property type="project" value="UniProtKB-KW"/>
</dbReference>
<dbReference type="GO" id="GO:0006954">
    <property type="term" value="P:inflammatory response"/>
    <property type="evidence" value="ECO:0007669"/>
    <property type="project" value="UniProtKB-KW"/>
</dbReference>
<dbReference type="GO" id="GO:0045087">
    <property type="term" value="P:innate immune response"/>
    <property type="evidence" value="ECO:0007669"/>
    <property type="project" value="UniProtKB-KW"/>
</dbReference>
<dbReference type="CDD" id="cd00017">
    <property type="entry name" value="ANATO"/>
    <property type="match status" value="1"/>
</dbReference>
<dbReference type="CDD" id="cd02896">
    <property type="entry name" value="complement_C3_C4_C5"/>
    <property type="match status" value="1"/>
</dbReference>
<dbReference type="FunFam" id="2.60.40.10:FF:000155">
    <property type="entry name" value="complement C3 isoform X1"/>
    <property type="match status" value="1"/>
</dbReference>
<dbReference type="FunFam" id="1.20.91.20:FF:000006">
    <property type="entry name" value="Complement C4"/>
    <property type="match status" value="1"/>
</dbReference>
<dbReference type="FunFam" id="2.60.40.690:FF:000002">
    <property type="entry name" value="Complement C4 isoform-A"/>
    <property type="match status" value="1"/>
</dbReference>
<dbReference type="FunFam" id="1.50.10.20:FF:000010">
    <property type="entry name" value="Complement C4-A"/>
    <property type="match status" value="1"/>
</dbReference>
<dbReference type="FunFam" id="2.20.130.20:FF:000002">
    <property type="entry name" value="Complement C4-A"/>
    <property type="match status" value="1"/>
</dbReference>
<dbReference type="FunFam" id="2.40.50.120:FF:000009">
    <property type="entry name" value="Complement C4-A"/>
    <property type="match status" value="1"/>
</dbReference>
<dbReference type="FunFam" id="2.60.40.10:FF:000803">
    <property type="entry name" value="Complement C4-A"/>
    <property type="match status" value="1"/>
</dbReference>
<dbReference type="FunFam" id="2.60.40.1930:FF:000004">
    <property type="entry name" value="Complement C4-A"/>
    <property type="match status" value="1"/>
</dbReference>
<dbReference type="FunFam" id="2.60.40.1930:FF:000007">
    <property type="entry name" value="Complement C4-A"/>
    <property type="match status" value="1"/>
</dbReference>
<dbReference type="FunFam" id="2.60.40.1930:FF:000005">
    <property type="entry name" value="complement C4-A isoform X3"/>
    <property type="match status" value="1"/>
</dbReference>
<dbReference type="FunFam" id="6.20.50.160:FF:000001">
    <property type="entry name" value="Complement component 4"/>
    <property type="match status" value="1"/>
</dbReference>
<dbReference type="FunFam" id="2.60.40.1940:FF:000001">
    <property type="entry name" value="Complement component C3"/>
    <property type="match status" value="1"/>
</dbReference>
<dbReference type="FunFam" id="2.60.120.1540:FF:000006">
    <property type="entry name" value="MHC-linked complement C4"/>
    <property type="match status" value="1"/>
</dbReference>
<dbReference type="Gene3D" id="1.50.10.20">
    <property type="match status" value="1"/>
</dbReference>
<dbReference type="Gene3D" id="2.20.130.20">
    <property type="match status" value="1"/>
</dbReference>
<dbReference type="Gene3D" id="2.40.50.120">
    <property type="match status" value="1"/>
</dbReference>
<dbReference type="Gene3D" id="2.60.120.1540">
    <property type="match status" value="2"/>
</dbReference>
<dbReference type="Gene3D" id="2.60.40.1930">
    <property type="match status" value="3"/>
</dbReference>
<dbReference type="Gene3D" id="2.60.40.1940">
    <property type="match status" value="1"/>
</dbReference>
<dbReference type="Gene3D" id="6.20.50.160">
    <property type="match status" value="1"/>
</dbReference>
<dbReference type="Gene3D" id="2.60.40.690">
    <property type="entry name" value="Alpha-macroglobulin, receptor-binding domain"/>
    <property type="match status" value="1"/>
</dbReference>
<dbReference type="Gene3D" id="1.20.91.20">
    <property type="entry name" value="Anaphylotoxins (complement system)"/>
    <property type="match status" value="1"/>
</dbReference>
<dbReference type="Gene3D" id="2.60.40.10">
    <property type="entry name" value="Immunoglobulins"/>
    <property type="match status" value="2"/>
</dbReference>
<dbReference type="InterPro" id="IPR009048">
    <property type="entry name" value="A-macroglobulin_rcpt-bd"/>
</dbReference>
<dbReference type="InterPro" id="IPR036595">
    <property type="entry name" value="A-macroglobulin_rcpt-bd_sf"/>
</dbReference>
<dbReference type="InterPro" id="IPR050473">
    <property type="entry name" value="A2M/Complement_sys"/>
</dbReference>
<dbReference type="InterPro" id="IPR011625">
    <property type="entry name" value="A2M_N_BRD"/>
</dbReference>
<dbReference type="InterPro" id="IPR047565">
    <property type="entry name" value="Alpha-macroglob_thiol-ester_cl"/>
</dbReference>
<dbReference type="InterPro" id="IPR011626">
    <property type="entry name" value="Alpha-macroglobulin_TED"/>
</dbReference>
<dbReference type="InterPro" id="IPR000020">
    <property type="entry name" value="Anaphylatoxin/fibulin"/>
</dbReference>
<dbReference type="InterPro" id="IPR018081">
    <property type="entry name" value="Anaphylatoxin_comp_syst"/>
</dbReference>
<dbReference type="InterPro" id="IPR001840">
    <property type="entry name" value="Anaphylatoxn_comp_syst_dom"/>
</dbReference>
<dbReference type="InterPro" id="IPR048847">
    <property type="entry name" value="C4_MG1"/>
</dbReference>
<dbReference type="InterPro" id="IPR054587">
    <property type="entry name" value="CO4A-B_CUB_C"/>
</dbReference>
<dbReference type="InterPro" id="IPR013783">
    <property type="entry name" value="Ig-like_fold"/>
</dbReference>
<dbReference type="InterPro" id="IPR001599">
    <property type="entry name" value="Macroglobln_a2"/>
</dbReference>
<dbReference type="InterPro" id="IPR002890">
    <property type="entry name" value="MG2"/>
</dbReference>
<dbReference type="InterPro" id="IPR041555">
    <property type="entry name" value="MG3"/>
</dbReference>
<dbReference type="InterPro" id="IPR001134">
    <property type="entry name" value="Netrin_domain"/>
</dbReference>
<dbReference type="InterPro" id="IPR018933">
    <property type="entry name" value="Netrin_module_non-TIMP"/>
</dbReference>
<dbReference type="InterPro" id="IPR008930">
    <property type="entry name" value="Terpenoid_cyclase/PrenylTrfase"/>
</dbReference>
<dbReference type="InterPro" id="IPR008993">
    <property type="entry name" value="TIMP-like_OB-fold"/>
</dbReference>
<dbReference type="PANTHER" id="PTHR11412:SF86">
    <property type="entry name" value="COMPLEMENT C4-A-RELATED"/>
    <property type="match status" value="1"/>
</dbReference>
<dbReference type="PANTHER" id="PTHR11412">
    <property type="entry name" value="MACROGLOBULIN / COMPLEMENT"/>
    <property type="match status" value="1"/>
</dbReference>
<dbReference type="Pfam" id="PF00207">
    <property type="entry name" value="A2M"/>
    <property type="match status" value="1"/>
</dbReference>
<dbReference type="Pfam" id="PF07703">
    <property type="entry name" value="A2M_BRD"/>
    <property type="match status" value="1"/>
</dbReference>
<dbReference type="Pfam" id="PF07677">
    <property type="entry name" value="A2M_recep"/>
    <property type="match status" value="1"/>
</dbReference>
<dbReference type="Pfam" id="PF01821">
    <property type="entry name" value="ANATO"/>
    <property type="match status" value="1"/>
</dbReference>
<dbReference type="Pfam" id="PF21145">
    <property type="entry name" value="C4_MG1"/>
    <property type="match status" value="1"/>
</dbReference>
<dbReference type="Pfam" id="PF22661">
    <property type="entry name" value="CO4A-B_CUB_C"/>
    <property type="match status" value="1"/>
</dbReference>
<dbReference type="Pfam" id="PF01835">
    <property type="entry name" value="MG2"/>
    <property type="match status" value="1"/>
</dbReference>
<dbReference type="Pfam" id="PF17791">
    <property type="entry name" value="MG3"/>
    <property type="match status" value="1"/>
</dbReference>
<dbReference type="Pfam" id="PF01759">
    <property type="entry name" value="NTR"/>
    <property type="match status" value="1"/>
</dbReference>
<dbReference type="Pfam" id="PF07678">
    <property type="entry name" value="TED_complement"/>
    <property type="match status" value="1"/>
</dbReference>
<dbReference type="PRINTS" id="PR00004">
    <property type="entry name" value="ANAPHYLATOXN"/>
</dbReference>
<dbReference type="SMART" id="SM01360">
    <property type="entry name" value="A2M"/>
    <property type="match status" value="1"/>
</dbReference>
<dbReference type="SMART" id="SM01359">
    <property type="entry name" value="A2M_N_2"/>
    <property type="match status" value="1"/>
</dbReference>
<dbReference type="SMART" id="SM01361">
    <property type="entry name" value="A2M_recep"/>
    <property type="match status" value="1"/>
</dbReference>
<dbReference type="SMART" id="SM00104">
    <property type="entry name" value="ANATO"/>
    <property type="match status" value="1"/>
</dbReference>
<dbReference type="SMART" id="SM00643">
    <property type="entry name" value="C345C"/>
    <property type="match status" value="1"/>
</dbReference>
<dbReference type="SMART" id="SM01419">
    <property type="entry name" value="Thiol-ester_cl"/>
    <property type="match status" value="1"/>
</dbReference>
<dbReference type="SUPFAM" id="SSF49410">
    <property type="entry name" value="Alpha-macroglobulin receptor domain"/>
    <property type="match status" value="1"/>
</dbReference>
<dbReference type="SUPFAM" id="SSF47686">
    <property type="entry name" value="Anaphylotoxins (complement system)"/>
    <property type="match status" value="1"/>
</dbReference>
<dbReference type="SUPFAM" id="SSF48239">
    <property type="entry name" value="Terpenoid cyclases/Protein prenyltransferases"/>
    <property type="match status" value="1"/>
</dbReference>
<dbReference type="SUPFAM" id="SSF50242">
    <property type="entry name" value="TIMP-like"/>
    <property type="match status" value="1"/>
</dbReference>
<dbReference type="PROSITE" id="PS01177">
    <property type="entry name" value="ANAPHYLATOXIN_1"/>
    <property type="match status" value="1"/>
</dbReference>
<dbReference type="PROSITE" id="PS01178">
    <property type="entry name" value="ANAPHYLATOXIN_2"/>
    <property type="match status" value="1"/>
</dbReference>
<dbReference type="PROSITE" id="PS50189">
    <property type="entry name" value="NTR"/>
    <property type="match status" value="1"/>
</dbReference>
<protein>
    <recommendedName>
        <fullName>Complement C4-A</fullName>
    </recommendedName>
    <alternativeName>
        <fullName evidence="7">Sex-limited protein</fullName>
    </alternativeName>
    <component>
        <recommendedName>
            <fullName>Complement C4 beta chain</fullName>
        </recommendedName>
    </component>
    <component>
        <recommendedName>
            <fullName>Complement C4-A alpha chain</fullName>
        </recommendedName>
    </component>
    <component>
        <recommendedName>
            <fullName>C4a anaphylatoxin</fullName>
        </recommendedName>
    </component>
    <component>
        <recommendedName>
            <fullName>Complement C4b-A</fullName>
        </recommendedName>
    </component>
    <component>
        <recommendedName>
            <fullName>Complement C4 gamma chain</fullName>
        </recommendedName>
    </component>
</protein>
<proteinExistence type="evidence at transcript level"/>
<name>CO4A_MOUSE</name>
<feature type="signal peptide" evidence="2">
    <location>
        <begin position="1"/>
        <end position="19"/>
    </location>
</feature>
<feature type="chain" id="PRO_5042989285" description="Complement C4-A">
    <location>
        <begin position="20"/>
        <end position="1734"/>
    </location>
</feature>
<feature type="chain" id="PRO_0000462523" description="Complement C4 beta chain" evidence="1">
    <location>
        <begin position="20"/>
        <end position="673"/>
    </location>
</feature>
<feature type="propeptide" id="PRO_0000462524" evidence="1">
    <location>
        <begin position="674"/>
        <end position="677"/>
    </location>
</feature>
<feature type="chain" id="PRO_0000462525" description="Complement C4-A alpha chain" evidence="1">
    <location>
        <begin position="678"/>
        <end position="1436"/>
    </location>
</feature>
<feature type="chain" id="PRO_0000462526" description="C4a anaphylatoxin" evidence="1">
    <location>
        <begin position="678"/>
        <end position="753"/>
    </location>
</feature>
<feature type="chain" id="PRO_0000462527" description="Complement C4b-A" evidence="1">
    <location>
        <begin position="754"/>
        <end position="1436"/>
    </location>
</feature>
<feature type="propeptide" id="PRO_0000462528" evidence="1">
    <location>
        <begin position="1437"/>
        <end position="1443"/>
    </location>
</feature>
<feature type="chain" id="PRO_0000462529" description="Complement C4 gamma chain" evidence="1">
    <location>
        <begin position="1444"/>
        <end position="1734"/>
    </location>
</feature>
<feature type="domain" description="Anaphylatoxin-like" evidence="3">
    <location>
        <begin position="700"/>
        <end position="734"/>
    </location>
</feature>
<feature type="domain" description="NTR" evidence="4">
    <location>
        <begin position="1585"/>
        <end position="1732"/>
    </location>
</feature>
<feature type="site" description="Cleavage; by C1S, MASP2 and GZMK" evidence="1">
    <location>
        <begin position="753"/>
        <end position="754"/>
    </location>
</feature>
<feature type="modified residue" description="Sulfotyrosine" evidence="1">
    <location>
        <position position="1409"/>
    </location>
</feature>
<feature type="glycosylation site" description="N-linked (GlcNAc...) asparagine" evidence="2">
    <location>
        <position position="224"/>
    </location>
</feature>
<feature type="glycosylation site" description="N-linked (GlcNAc...) asparagine" evidence="2">
    <location>
        <position position="743"/>
    </location>
</feature>
<feature type="glycosylation site" description="N-linked (GlcNAc...) asparagine" evidence="2">
    <location>
        <position position="859"/>
    </location>
</feature>
<feature type="glycosylation site" description="N-linked (GlcNAc...) asparagine" evidence="2">
    <location>
        <position position="1128"/>
    </location>
</feature>
<feature type="glycosylation site" description="N-linked (GlcNAc...) asparagine" evidence="2">
    <location>
        <position position="1383"/>
    </location>
</feature>
<feature type="disulfide bond" evidence="1">
    <location>
        <begin position="66"/>
        <end position="95"/>
    </location>
</feature>
<feature type="disulfide bond" description="Interchain (with C-815)" evidence="1">
    <location>
        <position position="565"/>
    </location>
</feature>
<feature type="disulfide bond" evidence="1">
    <location>
        <begin position="633"/>
        <end position="667"/>
    </location>
</feature>
<feature type="disulfide bond" evidence="3">
    <location>
        <begin position="700"/>
        <end position="726"/>
    </location>
</feature>
<feature type="disulfide bond" evidence="3">
    <location>
        <begin position="701"/>
        <end position="733"/>
    </location>
</feature>
<feature type="disulfide bond" evidence="3">
    <location>
        <begin position="714"/>
        <end position="734"/>
    </location>
</feature>
<feature type="disulfide bond" description="Interchain (with C-565)" evidence="1">
    <location>
        <position position="815"/>
    </location>
</feature>
<feature type="disulfide bond" description="Interchain (with C-1580)" evidence="1">
    <location>
        <position position="871"/>
    </location>
</feature>
<feature type="disulfide bond" description="Interchain (with C-1556)" evidence="1">
    <location>
        <position position="1386"/>
    </location>
</feature>
<feature type="disulfide bond" evidence="1">
    <location>
        <begin position="1461"/>
        <end position="1525"/>
    </location>
</feature>
<feature type="disulfide bond" description="Interchain (with C-1386)" evidence="1">
    <location>
        <position position="1556"/>
    </location>
</feature>
<feature type="disulfide bond" evidence="1">
    <location>
        <begin position="1573"/>
        <end position="1578"/>
    </location>
</feature>
<feature type="disulfide bond" description="Interchain (with C-871)" evidence="1">
    <location>
        <position position="1580"/>
    </location>
</feature>
<feature type="disulfide bond" evidence="4">
    <location>
        <begin position="1585"/>
        <end position="1663"/>
    </location>
</feature>
<feature type="disulfide bond" evidence="4">
    <location>
        <begin position="1608"/>
        <end position="1732"/>
    </location>
</feature>
<feature type="disulfide bond" evidence="1">
    <location>
        <begin position="1708"/>
        <end position="1717"/>
    </location>
</feature>
<feature type="cross-link" description="Isoglutamyl cysteine thioester (Cys-Gln)" evidence="1">
    <location>
        <begin position="1002"/>
        <end position="1005"/>
    </location>
</feature>
<feature type="splice variant" id="VSP_062582" description="In isoform 2.">
    <location>
        <begin position="860"/>
        <end position="927"/>
    </location>
</feature>
<feature type="splice variant" id="VSP_062583" description="In isoform 2.">
    <original>K</original>
    <variation>KHGSEANSLGKCAPSRMKWSQEDQWPKVIFAVPSVSPGYERSQEQAAFWQAGLSGRLHPSLQLHPTPCL</variation>
    <location>
        <position position="1371"/>
    </location>
</feature>
<feature type="sequence conflict" description="In Ref. 5; AAI41051." evidence="8" ref="5">
    <original>R</original>
    <variation>W</variation>
    <location>
        <position position="2"/>
    </location>
</feature>
<feature type="sequence conflict" description="In Ref. 2; AAA39683." evidence="8" ref="2">
    <original>S</original>
    <variation>L</variation>
    <location>
        <position position="76"/>
    </location>
</feature>
<feature type="sequence conflict" description="In Ref. 5; AAI41051." evidence="8" ref="5">
    <original>Y</original>
    <variation>F</variation>
    <location>
        <position position="132"/>
    </location>
</feature>
<feature type="sequence conflict" description="In Ref. 5; AAI41051." evidence="8" ref="5">
    <original>S</original>
    <variation>P</variation>
    <location>
        <position position="194"/>
    </location>
</feature>
<feature type="sequence conflict" description="In Ref. 2; AAA39683." evidence="8" ref="2">
    <original>LQDT</original>
    <variation>FQDA</variation>
    <location>
        <begin position="196"/>
        <end position="199"/>
    </location>
</feature>
<feature type="sequence conflict" description="In Ref. 5; AAI41051." evidence="8" ref="5">
    <original>TIPD</original>
    <variation>IIPN</variation>
    <location>
        <begin position="201"/>
        <end position="204"/>
    </location>
</feature>
<feature type="sequence conflict" description="In Ref. 5; AAI41051 and 2; AAA39683." evidence="8" ref="5 2">
    <original>R</original>
    <variation>Q</variation>
    <location>
        <position position="295"/>
    </location>
</feature>
<feature type="sequence conflict" description="In Ref. 5; AAI41051." evidence="8" ref="5">
    <original>R</original>
    <variation>H</variation>
    <location>
        <position position="335"/>
    </location>
</feature>
<feature type="sequence conflict" description="In Ref. 2; AAA39683." evidence="8" ref="2">
    <original>KRH</original>
    <variation>TAQ</variation>
    <location>
        <begin position="373"/>
        <end position="375"/>
    </location>
</feature>
<feature type="sequence conflict" description="In Ref. 5; AAI41051 and 2; AAA39683." evidence="8" ref="5 2">
    <original>P</original>
    <variation>A</variation>
    <location>
        <position position="405"/>
    </location>
</feature>
<feature type="sequence conflict" description="In Ref. 5; AAI41051." evidence="8" ref="5">
    <original>G</original>
    <variation>E</variation>
    <location>
        <position position="440"/>
    </location>
</feature>
<feature type="sequence conflict" description="In Ref. 5; AAI41051 and 2; AAA39683." evidence="8" ref="5 2">
    <original>M</original>
    <variation>T</variation>
    <location>
        <position position="453"/>
    </location>
</feature>
<feature type="sequence conflict" description="In Ref. 5; AAI41051." evidence="8" ref="5">
    <original>S</original>
    <variation>R</variation>
    <location>
        <position position="517"/>
    </location>
</feature>
<feature type="sequence conflict" description="In Ref. 5; AAI41051." evidence="8" ref="5">
    <original>H</original>
    <variation>R</variation>
    <location>
        <position position="580"/>
    </location>
</feature>
<feature type="sequence conflict" description="In Ref. 5; AAI41051 and 2; AAA39683." evidence="8" ref="5 2">
    <original>R</original>
    <variation>Q</variation>
    <location>
        <position position="588"/>
    </location>
</feature>
<feature type="sequence conflict" description="In Ref. 5; AAI41051 and 2; AAA39683." evidence="8" ref="5 2">
    <original>NSYNV</original>
    <variation>DSYNL</variation>
    <location>
        <begin position="627"/>
        <end position="631"/>
    </location>
</feature>
<feature type="sequence conflict" description="In Ref. 5; AAI41051." evidence="8" ref="5">
    <original>R</original>
    <variation>C</variation>
    <location>
        <position position="699"/>
    </location>
</feature>
<feature type="sequence conflict" description="In Ref. 5; AAI41051." evidence="8" ref="5">
    <original>T</original>
    <variation>A</variation>
    <location>
        <position position="706"/>
    </location>
</feature>
<feature type="sequence conflict" description="In Ref. 5; AAI41051." evidence="8" ref="5">
    <original>N</original>
    <variation>D</variation>
    <location>
        <position position="743"/>
    </location>
</feature>
<feature type="sequence conflict" description="In Ref. 2; AAA39683." evidence="8" ref="2">
    <original>P</original>
    <variation>H</variation>
    <location>
        <position position="750"/>
    </location>
</feature>
<feature type="sequence conflict" description="In Ref. 2; AAA39683." evidence="8" ref="2">
    <original>E</original>
    <variation>D</variation>
    <location>
        <position position="775"/>
    </location>
</feature>
<feature type="sequence conflict" description="In Ref. 5; AAI41051 and 2; AAA39683." evidence="8" ref="5 2">
    <original>E</original>
    <variation>G</variation>
    <location>
        <position position="986"/>
    </location>
</feature>
<feature type="sequence conflict" description="In Ref. 5; AAI41051 and 2; AAA39683." evidence="8" ref="5 2">
    <original>G</original>
    <variation>RS</variation>
    <location>
        <position position="1001"/>
    </location>
</feature>
<feature type="sequence conflict" description="In Ref. 5; AAI41051." evidence="8" ref="5">
    <original>S</original>
    <variation>F</variation>
    <location>
        <position position="1088"/>
    </location>
</feature>
<feature type="sequence conflict" description="In Ref. 5; AAI41051." evidence="8" ref="5">
    <original>R</original>
    <variation>Q</variation>
    <location>
        <position position="1149"/>
    </location>
</feature>
<feature type="sequence conflict" description="In Ref. 5; AAI41051." evidence="8" ref="5">
    <original>A</original>
    <variation>V</variation>
    <location>
        <position position="1191"/>
    </location>
</feature>
<feature type="sequence conflict" description="In Ref. 2; AAA39683." evidence="8" ref="2">
    <original>VLRPA</original>
    <variation>MLRPR</variation>
    <location>
        <begin position="1233"/>
        <end position="1237"/>
    </location>
</feature>
<feature type="sequence conflict" description="In Ref. 5; AAI41051." evidence="8" ref="5">
    <original>A</original>
    <variation>V</variation>
    <location>
        <position position="1318"/>
    </location>
</feature>
<feature type="sequence conflict" description="In Ref. 2; AAA39683." evidence="8" ref="2">
    <original>K</original>
    <variation>N</variation>
    <location>
        <position position="1320"/>
    </location>
</feature>
<feature type="sequence conflict" description="In Ref. 2; AAA39683." evidence="8" ref="2">
    <original>V</original>
    <variation>G</variation>
    <location>
        <position position="1335"/>
    </location>
</feature>
<feature type="sequence conflict" description="In Ref. 2; AAA39683." evidence="8" ref="2">
    <original>Q</original>
    <variation>E</variation>
    <location>
        <position position="1432"/>
    </location>
</feature>
<feature type="sequence conflict" description="In Ref. 5; AAI41051." evidence="8" ref="5">
    <original>A</original>
    <variation>E</variation>
    <location>
        <position position="1476"/>
    </location>
</feature>
<feature type="sequence conflict" description="In Ref. 5; AAI41051." evidence="8" ref="5">
    <original>A</original>
    <variation>T</variation>
    <location>
        <position position="1544"/>
    </location>
</feature>
<feature type="sequence conflict" description="In Ref. 5; AAI41051." evidence="8" ref="5">
    <original>R</original>
    <variation>Q</variation>
    <location>
        <position position="1603"/>
    </location>
</feature>
<feature type="sequence conflict" description="In Ref. 5; AAI41051 and 2; AAA39683." evidence="8" ref="5 2">
    <original>F</original>
    <variation>L</variation>
    <location>
        <position position="1632"/>
    </location>
</feature>
<feature type="sequence conflict" description="In Ref. 5; AAI41051 and 2; AAA39683." evidence="8" ref="5 2">
    <original>T</original>
    <variation>A</variation>
    <location>
        <position position="1661"/>
    </location>
</feature>
<evidence type="ECO:0000250" key="1">
    <source>
        <dbReference type="UniProtKB" id="P0C0L4"/>
    </source>
</evidence>
<evidence type="ECO:0000255" key="2"/>
<evidence type="ECO:0000255" key="3">
    <source>
        <dbReference type="PROSITE-ProRule" id="PRU00022"/>
    </source>
</evidence>
<evidence type="ECO:0000255" key="4">
    <source>
        <dbReference type="PROSITE-ProRule" id="PRU00295"/>
    </source>
</evidence>
<evidence type="ECO:0000269" key="5">
    <source>
    </source>
</evidence>
<evidence type="ECO:0000269" key="6">
    <source>
    </source>
</evidence>
<evidence type="ECO:0000303" key="7">
    <source>
    </source>
</evidence>
<evidence type="ECO:0000305" key="8"/>
<evidence type="ECO:0000312" key="9">
    <source>
        <dbReference type="MGI" id="MGI:98320"/>
    </source>
</evidence>
<gene>
    <name evidence="9" type="primary">C4a</name>
    <name evidence="7" type="synonym">Slp</name>
</gene>
<accession>A0AAQ4VMX2</accession>
<accession>B9EIU2</accession>
<accession>Q6P3Y0</accession>
<accession>V9GZG9</accession>
<sequence length="1734" mass="192883">MRLLWGLAWVFSFCASSLQKPRLLLFSPSVVNLGTPLSVGVQLLDAPPGQEVKGSVFLRNPKGGSCSPKKDFKLSSGDDFVLLSLEVPLEDVRSCGLFDLRRAPYIQLVAQSPWLRNTAFKATETQGVNLLYSSRRGHIFVQTDQPIYNPGQRVRYRVFALDQKMRPSTDFLTITVENSHGLRVLKKEIFTSTSILQDTFTIPDISEPGTWKISARFSDGLESNRSTHFEVKKYVLPNFEVKITPWKPYILMVPSNSDEIQLDIQARYIYGKPVQGVAYTRFALMDEQGKRTFLRGLETQAKLVEGRTHISISKDQFQAALDKINIGVRDLEGLRLYAATAVIESPGGEMEEAELTSWRFVSSAFSLDLSRTKRHLVPGAHFLLQALVREISGSEASNVIVKVSPTLVSGSDSQVLNVQQSTNRIGQVSISFPIPPTVTGLRLLVSAGSLYPMIARLTVQSPPSRGTGFLSIEPLDPRSPRVGDTFILNLQAVGIPAPTFSHYYYMIISRGQIMAMSREARRTVTSVSVLVDHQLAPSFYFVAYFYHQGHPVANSLLINIQPRDCEGKLQLKVVGAKEYHNGDMMKLRIQTDSKALVALGAVDTALYAVGGWSHKPLDMSKVFEVINSYNVGCGPGGGDDAPQVFQDAGLAFSDGDRLTQTREDLSCPKEKKSRQKRNVNFLKALSEKLGQYSSPDAKRCCQDGMTKLPMKRTCEQRAARVPQQACREPFLSCCKFAEDLRRNQTRSQAPLARKVRDMVNLIEEDDILVRTSFPENWLWRVEPVDSSKLLTVRLPDSMTTWEIHGVSLSKSKGLCVAKPTRVRVFRKFHLHLRLPISVRRFEQLELRPVLYNYLNDDKNVSVHVTPVEGLCMAGGGMMAQWVIVPAGSALPVAFSVVPTASTNVPLKLVAKGTLDSSDSVSKILQIEKEGAIHREEIVYNLDPLNNLGQMLEIPGSSDPNIVPEGDFSTFVKVTASEPLETLGSEEALSPGGVASLLRLPGCAEQTMIYLAPTLTASNYLDRTKQWSKLSPETKDHAVHLIQKGHVRIQQFRKKDGSFGAWLHRDSSTWLTAFVLKILSLAQEQVGNSPEKLQETASWLLAQQLGDGSFHDPCPVIHRAMQGGLVGSNETVALTAFVVIALHHGLNVFREGHAKQLKNRVEASITKANSFLGQKASAGLLGAHAAAITAYALTLTKASEDLRNVAHNSLMAMAEETGENLYWGLVLGSQDKVVLRPADPRSPTEPVPQAPALWIETTAYALLHLLLREGKGKMADKAASWLTHQGNFHGAFRSTQDTVVTLDALSAYWIASHTTEEKALKVTLSSMGRNGLKTHVLHLNNHQVKGLEEELKFSLGSTISVKVEGNSKGTLKILRTYNVLDMKNTTCQDLQIEVKVTDAVEYAWSAYEDYEDDYNMPATDDPSVPLQPVTPLQLFEGRRSRRRREAPKVAEERESRVHYTVCIWRNGKLGLSGMAIADITLLSGFHALRADLEKLTSLSDRYVSHFETDGPHVLLYFDSVPTTRECVGFGASQEVVVGLVQPASAVLYDYYSPDHKCSVFYAAPTKSQLLATLCSGDVCQCAEGKCPRLLRSLERRVEDKDGYRMRFACYYHQVEYGFTVKVLREDGRAAFRFFESKITQVLHFRTDTMASIGQTRNFLSRTSCRLRLEPNKEYLIMGMDGETSDNKGDPQYLLDSNTWIEEMPSEQMCKSTRHRAACFQLKDFLMEFSSRGCQV</sequence>
<organism>
    <name type="scientific">Mus musculus</name>
    <name type="common">Mouse</name>
    <dbReference type="NCBI Taxonomy" id="10090"/>
    <lineage>
        <taxon>Eukaryota</taxon>
        <taxon>Metazoa</taxon>
        <taxon>Chordata</taxon>
        <taxon>Craniata</taxon>
        <taxon>Vertebrata</taxon>
        <taxon>Euteleostomi</taxon>
        <taxon>Mammalia</taxon>
        <taxon>Eutheria</taxon>
        <taxon>Euarchontoglires</taxon>
        <taxon>Glires</taxon>
        <taxon>Rodentia</taxon>
        <taxon>Myomorpha</taxon>
        <taxon>Muroidea</taxon>
        <taxon>Muridae</taxon>
        <taxon>Murinae</taxon>
        <taxon>Mus</taxon>
        <taxon>Mus</taxon>
    </lineage>
</organism>
<reference key="1">
    <citation type="journal article" date="2009" name="PLoS Biol.">
        <title>Lineage-specific biology revealed by a finished genome assembly of the mouse.</title>
        <authorList>
            <person name="Church D.M."/>
            <person name="Goodstadt L."/>
            <person name="Hillier L.W."/>
            <person name="Zody M.C."/>
            <person name="Goldstein S."/>
            <person name="She X."/>
            <person name="Bult C.J."/>
            <person name="Agarwala R."/>
            <person name="Cherry J.L."/>
            <person name="DiCuccio M."/>
            <person name="Hlavina W."/>
            <person name="Kapustin Y."/>
            <person name="Meric P."/>
            <person name="Maglott D."/>
            <person name="Birtle Z."/>
            <person name="Marques A.C."/>
            <person name="Graves T."/>
            <person name="Zhou S."/>
            <person name="Teague B."/>
            <person name="Potamousis K."/>
            <person name="Churas C."/>
            <person name="Place M."/>
            <person name="Herschleb J."/>
            <person name="Runnheim R."/>
            <person name="Forrest D."/>
            <person name="Amos-Landgraf J."/>
            <person name="Schwartz D.C."/>
            <person name="Cheng Z."/>
            <person name="Lindblad-Toh K."/>
            <person name="Eichler E.E."/>
            <person name="Ponting C.P."/>
        </authorList>
    </citation>
    <scope>NUCLEOTIDE SEQUENCE [LARGE SCALE GENOMIC DNA]</scope>
    <source>
        <strain>C57BL/6J</strain>
    </source>
</reference>
<reference key="2">
    <citation type="journal article" date="1984" name="Proc. Natl. Acad. Sci. U.S.A.">
        <title>Isolation of cDNA clones specifying the fourth component of mouse complement and its isotype, sex-limited protein.</title>
        <authorList>
            <person name="Nonaka M."/>
            <person name="Takahashi M."/>
            <person name="Natsuume-Sakai S."/>
            <person name="Nonaka M."/>
            <person name="Tanaka S."/>
            <person name="Shimizu A."/>
            <person name="Honjo T."/>
        </authorList>
    </citation>
    <scope>NUCLEOTIDE SEQUENCE [MRNA] OF 20-1734</scope>
</reference>
<reference key="3">
    <citation type="journal article" date="1985" name="Immunol. Rev.">
        <title>Molecular cloning and characterization of complementary and genomic DNA clones for mouse C4 and Slp.</title>
        <authorList>
            <person name="Nonaka M."/>
            <person name="Nakayama K."/>
            <person name="Yeul Y.D."/>
            <person name="Shimizu A."/>
            <person name="Takahashi M."/>
        </authorList>
    </citation>
    <scope>NUCLEOTIDE SEQUENCE [MRNA] OF 20-1734</scope>
</reference>
<reference key="4">
    <citation type="journal article" date="1986" name="J. Immunol.">
        <title>Complete nucleotide and derived amino acid sequences of sex-limited protein (Slp), nonfunctional isotype of the fourth component of mouse complement (C4).</title>
        <authorList>
            <person name="Nonaka M."/>
            <person name="Nakayama K."/>
            <person name="Yeul Y.D."/>
            <person name="Takahashi M."/>
        </authorList>
    </citation>
    <scope>NUCLEOTIDE SEQUENCE [MRNA] OF 20-1734</scope>
</reference>
<reference key="5">
    <citation type="journal article" date="2004" name="Genome Res.">
        <title>The status, quality, and expansion of the NIH full-length cDNA project: the Mammalian Gene Collection (MGC).</title>
        <authorList>
            <consortium name="The MGC Project Team"/>
        </authorList>
    </citation>
    <scope>NUCLEOTIDE SEQUENCE [LARGE SCALE MRNA] (ISOFORM 2)</scope>
    <source>
        <strain>FVB/N</strain>
        <tissue>Brain</tissue>
        <tissue>Liver</tissue>
    </source>
</reference>
<reference key="6">
    <citation type="journal article" date="1994" name="J. Immunol. Methods">
        <title>Rapid, activity-guided isolation of sex-limited protein (Slp) from mouse serum by fractionated precipitation and high-performance liquid chromatography.</title>
        <authorList>
            <person name="Van den Berg C.W."/>
            <person name="Van Dijk H."/>
        </authorList>
    </citation>
    <scope>FUNCTION</scope>
</reference>
<reference key="7">
    <citation type="journal article" date="2020" name="J. Immunol.">
        <title>An ultrahigh-affinity complement C4b-specific nanobody inhibits in vivo assembly of the classical pathway proconvertase.</title>
        <authorList>
            <person name="Zarantonello A."/>
            <person name="Presumey J."/>
            <person name="Simoni L."/>
            <person name="Yalcin E."/>
            <person name="Fox R."/>
            <person name="Hansen A."/>
            <person name="Olesen H.G."/>
            <person name="Thiel S."/>
            <person name="Johnson M.B."/>
            <person name="Stevens B."/>
            <person name="Laursen N.S."/>
            <person name="Carroll M.C."/>
            <person name="Andersen G.R."/>
        </authorList>
    </citation>
    <scope>FUNCTION</scope>
    <scope>ACTIVITY REGULATION</scope>
</reference>
<keyword id="KW-0025">Alternative splicing</keyword>
<keyword id="KW-0966">Cell projection</keyword>
<keyword id="KW-0165">Cleavage on pair of basic residues</keyword>
<keyword id="KW-0180">Complement pathway</keyword>
<keyword id="KW-1015">Disulfide bond</keyword>
<keyword id="KW-0325">Glycoprotein</keyword>
<keyword id="KW-0391">Immunity</keyword>
<keyword id="KW-0395">Inflammatory response</keyword>
<keyword id="KW-0399">Innate immunity</keyword>
<keyword id="KW-0597">Phosphoprotein</keyword>
<keyword id="KW-1185">Reference proteome</keyword>
<keyword id="KW-0964">Secreted</keyword>
<keyword id="KW-0732">Signal</keyword>
<keyword id="KW-0765">Sulfation</keyword>
<keyword id="KW-0770">Synapse</keyword>
<keyword id="KW-0882">Thioester bond</keyword>
<comment type="function">
    <text evidence="5 6">Precursor of non-enzymatic components of the classical, lectin and GZMK complement pathways, which consist in a cascade of proteins that leads to phagocytosis and breakdown of pathogens and signaling that strengthens the adaptive immune system.</text>
</comment>
<comment type="function">
    <molecule>Complement C4b-A</molecule>
    <text evidence="1">Non-enzymatic component of C3 and C5 convertases (By similarity). Generated following cleavage by complement proteases (C1S, MASP2 or GZMK, depending on the complement pathway), it covalently attaches to the surface of pathogens, where it acts as an opsonin that marks the surface of antigens for removal (By similarity). It then recruits the serine protease complement C2b to form the C3 and C5 convertases, which cleave and activate C3 and C5, respectively, the next components of the complement pathways (By similarity). Complement C4b-A isotype is responsible for effective binding to form amide bonds with immune aggregates or protein antigens, while complement C4b-B isotype catalyzes the transacylation of the thioester carbonyl group to form ester bonds with carbohydrate antigens (By similarity).</text>
</comment>
<comment type="function">
    <molecule>C4a anaphylatoxin</molecule>
    <text evidence="1">Putative humoral mediator released following cleavage by complement proteases (C1S, MASP2 or GZMK, depending on the complement pathway). While it is strongly similar to anaphylatoxins, its role is unclear. Was reported to act as a mediator of local inflammatory process; however these effects were probably due to contamination with C3a and/C5a anaphylatoxins in biological assays.</text>
</comment>
<comment type="activity regulation">
    <molecule>Complement C4b-A</molecule>
    <text evidence="5">Specifically inhibited by nanobody hC4Nb8, inhibiting the classical complement pathway.</text>
</comment>
<comment type="subunit">
    <text evidence="1">In absence of complement activation, circulates in blood as a disulfide-linked trimer of an alpha, beta and gamma chain.</text>
</comment>
<comment type="subunit">
    <molecule>Complement C4b-A</molecule>
    <text evidence="1">Complement C4b is composed of Complement C4b-A, Complement C4 beta and Complement C4 gamma chains that are associated via disulfide bonds (By similarity). Non-enzymatic component of the C3 convertase, also named C4bC2b, composed of the serine protease complement C2b (C2), as well as complement C4b (By similarity). Non-enzymatic component of the C5 convertase, also named C4bC2bC3b, composed of the serine protease complement C2b (C2), complement C3b, as well as complement C4b (By similarity).</text>
</comment>
<comment type="subcellular location">
    <subcellularLocation>
        <location evidence="1">Secreted</location>
    </subcellularLocation>
    <subcellularLocation>
        <location evidence="1">Synapse</location>
    </subcellularLocation>
    <subcellularLocation>
        <location evidence="1">Cell projection</location>
        <location evidence="1">Axon</location>
    </subcellularLocation>
    <subcellularLocation>
        <location evidence="1">Cell projection</location>
        <location evidence="1">Dendrite</location>
    </subcellularLocation>
</comment>
<comment type="subcellular location">
    <molecule>C4a anaphylatoxin</molecule>
    <subcellularLocation>
        <location evidence="1">Secreted</location>
    </subcellularLocation>
</comment>
<comment type="subcellular location">
    <molecule>Complement C4b-A</molecule>
    <subcellularLocation>
        <location evidence="1">Secreted</location>
    </subcellularLocation>
    <subcellularLocation>
        <location evidence="1">Cell surface</location>
    </subcellularLocation>
    <text evidence="1">Covalently associated with the surface of pathogens: the internal thioester bond reacts with carbohydrate antigens on the target surface to form amide or ester bonds.</text>
</comment>
<comment type="alternative products">
    <event type="alternative splicing"/>
    <isoform>
        <id>A0AAQ4VMX2-1</id>
        <name>1</name>
        <sequence type="displayed"/>
    </isoform>
    <isoform>
        <id>A0AAQ4VMX2-2</id>
        <name>2</name>
        <sequence type="described" ref="VSP_062582 VSP_062583"/>
    </isoform>
</comment>
<comment type="PTM">
    <text evidence="1">Prior to secretion, the single-chain precursor is enzymatically cleaved by plasminogen (PLG) to yield non-identical chains alpha, beta and gamma (By similarity). During activation of the complement systems, the alpha chain is cleaved into C4a and C4b by different proteases depending on the complement pathway: C4b stays linked to the beta and gamma chains, while C4a is released in the plasma (By similarity). The alpha chain is cleaved by C1S to generate C4a and C4b following activation by the classical complement system (By similarity). The alpha chain is cleaved to generate C4a and C4b by MASP2 following activation by the lectin complement system (By similarity). The alpha chain is cleaved by GZMK to generate C4a and C4b following activation by the GZMK complement system (By similarity). Further degradation of C4b by C1 into the inactive fragments C4c and C4d blocks the generation of C3 convertase (By similarity). The proteolytic cleavages often are incomplete so that many structural forms can be found in plasma (By similarity).</text>
</comment>
<comment type="PTM">
    <molecule>Complement C4b-A</molecule>
    <text evidence="1">Upon activation, the internal thioester bond reacts with carbohydrate antigens on the target surface to form amide or ester bonds, leading to covalent association with the surface of pathogens.</text>
</comment>
<comment type="PTM">
    <molecule>Complement C4b-A</molecule>
    <text evidence="1">Complement C4b interacts with complement C3b via a thioester linkage.</text>
</comment>
<comment type="PTM">
    <text evidence="1">N- and O-glycosylated. O-glycosylated with a core 1 or possibly core 8 glycan.</text>
</comment>